<dbReference type="EMBL" id="AK032330">
    <property type="protein sequence ID" value="BAC27818.1"/>
    <property type="status" value="ALT_FRAME"/>
    <property type="molecule type" value="mRNA"/>
</dbReference>
<dbReference type="EMBL" id="BC020160">
    <property type="protein sequence ID" value="AAH20160.1"/>
    <property type="molecule type" value="mRNA"/>
</dbReference>
<dbReference type="EMBL" id="AK014751">
    <property type="protein sequence ID" value="BAB29531.1"/>
    <property type="molecule type" value="mRNA"/>
</dbReference>
<dbReference type="EMBL" id="AK042271">
    <property type="protein sequence ID" value="BAC31210.1"/>
    <property type="molecule type" value="mRNA"/>
</dbReference>
<dbReference type="EMBL" id="AL591064">
    <property type="status" value="NOT_ANNOTATED_CDS"/>
    <property type="molecule type" value="Genomic_DNA"/>
</dbReference>
<dbReference type="CCDS" id="CCDS17080.1"/>
<dbReference type="RefSeq" id="NP_083297.1">
    <property type="nucleotide sequence ID" value="NM_029021.1"/>
</dbReference>
<dbReference type="STRING" id="10090.ENSMUSP00000029213"/>
<dbReference type="GlyGen" id="Q9D611">
    <property type="glycosylation" value="1 site"/>
</dbReference>
<dbReference type="iPTMnet" id="Q9D611"/>
<dbReference type="PhosphoSitePlus" id="Q9D611"/>
<dbReference type="PaxDb" id="10090-ENSMUSP00000029213"/>
<dbReference type="Antibodypedia" id="28113">
    <property type="antibodies" value="26 antibodies from 11 providers"/>
</dbReference>
<dbReference type="DNASU" id="74614"/>
<dbReference type="Ensembl" id="ENSMUST00000029213.5">
    <property type="protein sequence ID" value="ENSMUSP00000029213.5"/>
    <property type="gene ID" value="ENSMUSG00000027670.5"/>
</dbReference>
<dbReference type="GeneID" id="74614"/>
<dbReference type="KEGG" id="mmu:74614"/>
<dbReference type="UCSC" id="uc008nxr.1">
    <property type="organism name" value="mouse"/>
</dbReference>
<dbReference type="AGR" id="MGI:1921864"/>
<dbReference type="CTD" id="128506"/>
<dbReference type="MGI" id="MGI:1921864">
    <property type="gene designation" value="Ocstamp"/>
</dbReference>
<dbReference type="VEuPathDB" id="HostDB:ENSMUSG00000027670"/>
<dbReference type="eggNOG" id="ENOG502QWNK">
    <property type="taxonomic scope" value="Eukaryota"/>
</dbReference>
<dbReference type="GeneTree" id="ENSGT00940000153269"/>
<dbReference type="HOGENOM" id="CLU_045128_0_0_1"/>
<dbReference type="InParanoid" id="Q9D611"/>
<dbReference type="OMA" id="ARCVFSM"/>
<dbReference type="OrthoDB" id="9947082at2759"/>
<dbReference type="PhylomeDB" id="Q9D611"/>
<dbReference type="TreeFam" id="TF332562"/>
<dbReference type="BioGRID-ORCS" id="74614">
    <property type="hits" value="3 hits in 77 CRISPR screens"/>
</dbReference>
<dbReference type="PRO" id="PR:Q9D611"/>
<dbReference type="Proteomes" id="UP000000589">
    <property type="component" value="Chromosome 2"/>
</dbReference>
<dbReference type="RNAct" id="Q9D611">
    <property type="molecule type" value="protein"/>
</dbReference>
<dbReference type="Bgee" id="ENSMUSG00000027670">
    <property type="expression patterns" value="Expressed in intramembranous bone and 27 other cell types or tissues"/>
</dbReference>
<dbReference type="GO" id="GO:0016020">
    <property type="term" value="C:membrane"/>
    <property type="evidence" value="ECO:0007669"/>
    <property type="project" value="UniProtKB-SubCell"/>
</dbReference>
<dbReference type="GO" id="GO:0071391">
    <property type="term" value="P:cellular response to estrogen stimulus"/>
    <property type="evidence" value="ECO:0000314"/>
    <property type="project" value="UniProtKB"/>
</dbReference>
<dbReference type="GO" id="GO:0071356">
    <property type="term" value="P:cellular response to tumor necrosis factor"/>
    <property type="evidence" value="ECO:0000314"/>
    <property type="project" value="UniProtKB"/>
</dbReference>
<dbReference type="GO" id="GO:0072674">
    <property type="term" value="P:multinuclear osteoclast differentiation"/>
    <property type="evidence" value="ECO:0000315"/>
    <property type="project" value="UniProtKB"/>
</dbReference>
<dbReference type="GO" id="GO:0034241">
    <property type="term" value="P:positive regulation of macrophage fusion"/>
    <property type="evidence" value="ECO:0000316"/>
    <property type="project" value="MGI"/>
</dbReference>
<dbReference type="GO" id="GO:0045672">
    <property type="term" value="P:positive regulation of osteoclast differentiation"/>
    <property type="evidence" value="ECO:0000314"/>
    <property type="project" value="UniProtKB"/>
</dbReference>
<dbReference type="GO" id="GO:0090290">
    <property type="term" value="P:positive regulation of osteoclast proliferation"/>
    <property type="evidence" value="ECO:0000314"/>
    <property type="project" value="UniProtKB"/>
</dbReference>
<dbReference type="InterPro" id="IPR051856">
    <property type="entry name" value="CSR-E3_Ligase_Protein"/>
</dbReference>
<dbReference type="InterPro" id="IPR012858">
    <property type="entry name" value="DC_STAMP-like"/>
</dbReference>
<dbReference type="PANTHER" id="PTHR21041">
    <property type="entry name" value="DENDRITIC CELL-SPECIFIC TRANSMEMBRANE PROTEIN"/>
    <property type="match status" value="1"/>
</dbReference>
<dbReference type="PANTHER" id="PTHR21041:SF3">
    <property type="entry name" value="OSTEOCLAST STIMULATORY TRANSMEMBRANE PROTEIN"/>
    <property type="match status" value="1"/>
</dbReference>
<dbReference type="Pfam" id="PF07782">
    <property type="entry name" value="DC_STAMP"/>
    <property type="match status" value="1"/>
</dbReference>
<evidence type="ECO:0000255" key="1"/>
<evidence type="ECO:0000256" key="2">
    <source>
        <dbReference type="SAM" id="MobiDB-lite"/>
    </source>
</evidence>
<evidence type="ECO:0000269" key="3">
    <source>
    </source>
</evidence>
<evidence type="ECO:0000269" key="4">
    <source>
    </source>
</evidence>
<evidence type="ECO:0000269" key="5">
    <source>
    </source>
</evidence>
<evidence type="ECO:0000305" key="6"/>
<protein>
    <recommendedName>
        <fullName>Osteoclast stimulatory transmembrane protein</fullName>
        <shortName>OC-STAMP</shortName>
    </recommendedName>
</protein>
<gene>
    <name type="primary">Ocstamp</name>
</gene>
<comment type="function">
    <text evidence="3 4 5">Probable cell surface receptor that plays a role in cellular fusion and cell differentiation. Cooperates with DCSTAMP in modulating cell-cell fusion in both osteoclasts and foreign body giant cells (FBGCs). Involved in osteoclast bone resorption. Promotes osteoclast differentiation and may play a role in the multinucleated osteoclast maturation.</text>
</comment>
<comment type="subcellular location">
    <subcellularLocation>
        <location evidence="6">Membrane</location>
        <topology evidence="6">Multi-pass membrane protein</topology>
    </subcellularLocation>
</comment>
<comment type="tissue specificity">
    <text evidence="3 4 5">Expressed in osteoclast (at protein level). Ubiquitous. Highly expressed in multi-nuclear osteoclast cells compared to mono-nuclear macrophages. Expressed in foreign body giant cells (FBGCs).</text>
</comment>
<comment type="induction">
    <text evidence="3 4 5">Up-regulated during osteoclast and foreign body giant cells (FBGCs) differentiation by TNFSF11 and cytokines. Down-regulated by estrogen.</text>
</comment>
<comment type="disruption phenotype">
    <text evidence="5">Mice show a lack of multi-nuclear osteoclast and foreign body giant cell formation and a bone-resorbing efficiency reduction.</text>
</comment>
<comment type="sequence caution" evidence="6">
    <conflict type="frameshift">
        <sequence resource="EMBL-CDS" id="BAC27818"/>
    </conflict>
</comment>
<feature type="chain" id="PRO_0000342122" description="Osteoclast stimulatory transmembrane protein">
    <location>
        <begin position="1"/>
        <end position="498"/>
    </location>
</feature>
<feature type="topological domain" description="Cytoplasmic" evidence="1">
    <location>
        <begin position="1"/>
        <end position="51"/>
    </location>
</feature>
<feature type="transmembrane region" description="Helical" evidence="1">
    <location>
        <begin position="52"/>
        <end position="72"/>
    </location>
</feature>
<feature type="topological domain" description="Extracellular" evidence="1">
    <location>
        <begin position="73"/>
        <end position="81"/>
    </location>
</feature>
<feature type="transmembrane region" description="Helical" evidence="1">
    <location>
        <begin position="82"/>
        <end position="102"/>
    </location>
</feature>
<feature type="topological domain" description="Cytoplasmic" evidence="1">
    <location>
        <begin position="103"/>
        <end position="121"/>
    </location>
</feature>
<feature type="transmembrane region" description="Helical" evidence="1">
    <location>
        <begin position="122"/>
        <end position="142"/>
    </location>
</feature>
<feature type="topological domain" description="Extracellular" evidence="1">
    <location>
        <begin position="143"/>
        <end position="226"/>
    </location>
</feature>
<feature type="transmembrane region" description="Helical" evidence="1">
    <location>
        <begin position="227"/>
        <end position="247"/>
    </location>
</feature>
<feature type="topological domain" description="Cytoplasmic" evidence="1">
    <location>
        <begin position="248"/>
        <end position="303"/>
    </location>
</feature>
<feature type="transmembrane region" description="Helical" evidence="1">
    <location>
        <begin position="304"/>
        <end position="324"/>
    </location>
</feature>
<feature type="topological domain" description="Extracellular" evidence="1">
    <location>
        <begin position="325"/>
        <end position="401"/>
    </location>
</feature>
<feature type="transmembrane region" description="Helical" evidence="1">
    <location>
        <begin position="402"/>
        <end position="422"/>
    </location>
</feature>
<feature type="topological domain" description="Cytoplasmic" evidence="1">
    <location>
        <begin position="423"/>
        <end position="498"/>
    </location>
</feature>
<feature type="region of interest" description="Disordered" evidence="2">
    <location>
        <begin position="449"/>
        <end position="498"/>
    </location>
</feature>
<feature type="compositionally biased region" description="Polar residues" evidence="2">
    <location>
        <begin position="476"/>
        <end position="485"/>
    </location>
</feature>
<keyword id="KW-0221">Differentiation</keyword>
<keyword id="KW-0472">Membrane</keyword>
<keyword id="KW-1185">Reference proteome</keyword>
<keyword id="KW-0812">Transmembrane</keyword>
<keyword id="KW-1133">Transmembrane helix</keyword>
<proteinExistence type="evidence at protein level"/>
<accession>Q9D611</accession>
<accession>Q8C046</accession>
<organism>
    <name type="scientific">Mus musculus</name>
    <name type="common">Mouse</name>
    <dbReference type="NCBI Taxonomy" id="10090"/>
    <lineage>
        <taxon>Eukaryota</taxon>
        <taxon>Metazoa</taxon>
        <taxon>Chordata</taxon>
        <taxon>Craniata</taxon>
        <taxon>Vertebrata</taxon>
        <taxon>Euteleostomi</taxon>
        <taxon>Mammalia</taxon>
        <taxon>Eutheria</taxon>
        <taxon>Euarchontoglires</taxon>
        <taxon>Glires</taxon>
        <taxon>Rodentia</taxon>
        <taxon>Myomorpha</taxon>
        <taxon>Muroidea</taxon>
        <taxon>Muridae</taxon>
        <taxon>Murinae</taxon>
        <taxon>Mus</taxon>
        <taxon>Mus</taxon>
    </lineage>
</organism>
<name>OCSTP_MOUSE</name>
<sequence>MRTIRAATEHLFGLGWKFWRLGICKAVVPLQAAWKAFSQPVPASCNELLTQLLLCVSLASLIAGLAHHWLVSLQLYPLGPPALVTSLCGLFVFLSLGLVPPIRCLFVLSVPTLGSKQGRRLLLSYSAANLAVAVVPNVLGNVRAAGQVLSCVTEGSLESLLNTTYQLRQAARELGPASRAGSRSLTFEVEGKGSAFRLHMHTITQEILEDFSGLEFLARAALGTQRVVTGLFLLGLLGESAWYLHRYLTDLRFDNIYATRQLVRQLAQAGATHLLTSPPPWLLQTAQPKLSREELLSCLLRLGLLALLLVATAVTVASDYGAFLLAQAAVAWAQKLPTVPITLTVKYDASYKVLDFILFVLNQPPVESVFASMQRSFQWELRFTPHDCHLPQAQPPRVTAALAAGALQLLAGATLVLQAYAWRLRHTIAASFFPDQEARRLSHLQARLQRRHNQSDHLNKQPGTMATRESRKPGQGTRTLESQGPQAHDSLGPPYDLE</sequence>
<reference key="1">
    <citation type="journal article" date="2005" name="Science">
        <title>The transcriptional landscape of the mammalian genome.</title>
        <authorList>
            <person name="Carninci P."/>
            <person name="Kasukawa T."/>
            <person name="Katayama S."/>
            <person name="Gough J."/>
            <person name="Frith M.C."/>
            <person name="Maeda N."/>
            <person name="Oyama R."/>
            <person name="Ravasi T."/>
            <person name="Lenhard B."/>
            <person name="Wells C."/>
            <person name="Kodzius R."/>
            <person name="Shimokawa K."/>
            <person name="Bajic V.B."/>
            <person name="Brenner S.E."/>
            <person name="Batalov S."/>
            <person name="Forrest A.R."/>
            <person name="Zavolan M."/>
            <person name="Davis M.J."/>
            <person name="Wilming L.G."/>
            <person name="Aidinis V."/>
            <person name="Allen J.E."/>
            <person name="Ambesi-Impiombato A."/>
            <person name="Apweiler R."/>
            <person name="Aturaliya R.N."/>
            <person name="Bailey T.L."/>
            <person name="Bansal M."/>
            <person name="Baxter L."/>
            <person name="Beisel K.W."/>
            <person name="Bersano T."/>
            <person name="Bono H."/>
            <person name="Chalk A.M."/>
            <person name="Chiu K.P."/>
            <person name="Choudhary V."/>
            <person name="Christoffels A."/>
            <person name="Clutterbuck D.R."/>
            <person name="Crowe M.L."/>
            <person name="Dalla E."/>
            <person name="Dalrymple B.P."/>
            <person name="de Bono B."/>
            <person name="Della Gatta G."/>
            <person name="di Bernardo D."/>
            <person name="Down T."/>
            <person name="Engstrom P."/>
            <person name="Fagiolini M."/>
            <person name="Faulkner G."/>
            <person name="Fletcher C.F."/>
            <person name="Fukushima T."/>
            <person name="Furuno M."/>
            <person name="Futaki S."/>
            <person name="Gariboldi M."/>
            <person name="Georgii-Hemming P."/>
            <person name="Gingeras T.R."/>
            <person name="Gojobori T."/>
            <person name="Green R.E."/>
            <person name="Gustincich S."/>
            <person name="Harbers M."/>
            <person name="Hayashi Y."/>
            <person name="Hensch T.K."/>
            <person name="Hirokawa N."/>
            <person name="Hill D."/>
            <person name="Huminiecki L."/>
            <person name="Iacono M."/>
            <person name="Ikeo K."/>
            <person name="Iwama A."/>
            <person name="Ishikawa T."/>
            <person name="Jakt M."/>
            <person name="Kanapin A."/>
            <person name="Katoh M."/>
            <person name="Kawasawa Y."/>
            <person name="Kelso J."/>
            <person name="Kitamura H."/>
            <person name="Kitano H."/>
            <person name="Kollias G."/>
            <person name="Krishnan S.P."/>
            <person name="Kruger A."/>
            <person name="Kummerfeld S.K."/>
            <person name="Kurochkin I.V."/>
            <person name="Lareau L.F."/>
            <person name="Lazarevic D."/>
            <person name="Lipovich L."/>
            <person name="Liu J."/>
            <person name="Liuni S."/>
            <person name="McWilliam S."/>
            <person name="Madan Babu M."/>
            <person name="Madera M."/>
            <person name="Marchionni L."/>
            <person name="Matsuda H."/>
            <person name="Matsuzawa S."/>
            <person name="Miki H."/>
            <person name="Mignone F."/>
            <person name="Miyake S."/>
            <person name="Morris K."/>
            <person name="Mottagui-Tabar S."/>
            <person name="Mulder N."/>
            <person name="Nakano N."/>
            <person name="Nakauchi H."/>
            <person name="Ng P."/>
            <person name="Nilsson R."/>
            <person name="Nishiguchi S."/>
            <person name="Nishikawa S."/>
            <person name="Nori F."/>
            <person name="Ohara O."/>
            <person name="Okazaki Y."/>
            <person name="Orlando V."/>
            <person name="Pang K.C."/>
            <person name="Pavan W.J."/>
            <person name="Pavesi G."/>
            <person name="Pesole G."/>
            <person name="Petrovsky N."/>
            <person name="Piazza S."/>
            <person name="Reed J."/>
            <person name="Reid J.F."/>
            <person name="Ring B.Z."/>
            <person name="Ringwald M."/>
            <person name="Rost B."/>
            <person name="Ruan Y."/>
            <person name="Salzberg S.L."/>
            <person name="Sandelin A."/>
            <person name="Schneider C."/>
            <person name="Schoenbach C."/>
            <person name="Sekiguchi K."/>
            <person name="Semple C.A."/>
            <person name="Seno S."/>
            <person name="Sessa L."/>
            <person name="Sheng Y."/>
            <person name="Shibata Y."/>
            <person name="Shimada H."/>
            <person name="Shimada K."/>
            <person name="Silva D."/>
            <person name="Sinclair B."/>
            <person name="Sperling S."/>
            <person name="Stupka E."/>
            <person name="Sugiura K."/>
            <person name="Sultana R."/>
            <person name="Takenaka Y."/>
            <person name="Taki K."/>
            <person name="Tammoja K."/>
            <person name="Tan S.L."/>
            <person name="Tang S."/>
            <person name="Taylor M.S."/>
            <person name="Tegner J."/>
            <person name="Teichmann S.A."/>
            <person name="Ueda H.R."/>
            <person name="van Nimwegen E."/>
            <person name="Verardo R."/>
            <person name="Wei C.L."/>
            <person name="Yagi K."/>
            <person name="Yamanishi H."/>
            <person name="Zabarovsky E."/>
            <person name="Zhu S."/>
            <person name="Zimmer A."/>
            <person name="Hide W."/>
            <person name="Bult C."/>
            <person name="Grimmond S.M."/>
            <person name="Teasdale R.D."/>
            <person name="Liu E.T."/>
            <person name="Brusic V."/>
            <person name="Quackenbush J."/>
            <person name="Wahlestedt C."/>
            <person name="Mattick J.S."/>
            <person name="Hume D.A."/>
            <person name="Kai C."/>
            <person name="Sasaki D."/>
            <person name="Tomaru Y."/>
            <person name="Fukuda S."/>
            <person name="Kanamori-Katayama M."/>
            <person name="Suzuki M."/>
            <person name="Aoki J."/>
            <person name="Arakawa T."/>
            <person name="Iida J."/>
            <person name="Imamura K."/>
            <person name="Itoh M."/>
            <person name="Kato T."/>
            <person name="Kawaji H."/>
            <person name="Kawagashira N."/>
            <person name="Kawashima T."/>
            <person name="Kojima M."/>
            <person name="Kondo S."/>
            <person name="Konno H."/>
            <person name="Nakano K."/>
            <person name="Ninomiya N."/>
            <person name="Nishio T."/>
            <person name="Okada M."/>
            <person name="Plessy C."/>
            <person name="Shibata K."/>
            <person name="Shiraki T."/>
            <person name="Suzuki S."/>
            <person name="Tagami M."/>
            <person name="Waki K."/>
            <person name="Watahiki A."/>
            <person name="Okamura-Oho Y."/>
            <person name="Suzuki H."/>
            <person name="Kawai J."/>
            <person name="Hayashizaki Y."/>
        </authorList>
    </citation>
    <scope>NUCLEOTIDE SEQUENCE [LARGE SCALE MRNA]</scope>
    <source>
        <strain>C57BL/6J</strain>
        <tissue>Head</tissue>
        <tissue>Olfactory bulb</tissue>
        <tissue>Thymus</tissue>
    </source>
</reference>
<reference key="2">
    <citation type="journal article" date="2009" name="PLoS Biol.">
        <title>Lineage-specific biology revealed by a finished genome assembly of the mouse.</title>
        <authorList>
            <person name="Church D.M."/>
            <person name="Goodstadt L."/>
            <person name="Hillier L.W."/>
            <person name="Zody M.C."/>
            <person name="Goldstein S."/>
            <person name="She X."/>
            <person name="Bult C.J."/>
            <person name="Agarwala R."/>
            <person name="Cherry J.L."/>
            <person name="DiCuccio M."/>
            <person name="Hlavina W."/>
            <person name="Kapustin Y."/>
            <person name="Meric P."/>
            <person name="Maglott D."/>
            <person name="Birtle Z."/>
            <person name="Marques A.C."/>
            <person name="Graves T."/>
            <person name="Zhou S."/>
            <person name="Teague B."/>
            <person name="Potamousis K."/>
            <person name="Churas C."/>
            <person name="Place M."/>
            <person name="Herschleb J."/>
            <person name="Runnheim R."/>
            <person name="Forrest D."/>
            <person name="Amos-Landgraf J."/>
            <person name="Schwartz D.C."/>
            <person name="Cheng Z."/>
            <person name="Lindblad-Toh K."/>
            <person name="Eichler E.E."/>
            <person name="Ponting C.P."/>
        </authorList>
    </citation>
    <scope>NUCLEOTIDE SEQUENCE [LARGE SCALE GENOMIC DNA]</scope>
    <source>
        <strain>C57BL/6J</strain>
    </source>
</reference>
<reference key="3">
    <citation type="journal article" date="2004" name="Genome Res.">
        <title>The status, quality, and expansion of the NIH full-length cDNA project: the Mammalian Gene Collection (MGC).</title>
        <authorList>
            <consortium name="The MGC Project Team"/>
        </authorList>
    </citation>
    <scope>NUCLEOTIDE SEQUENCE [LARGE SCALE MRNA]</scope>
    <source>
        <strain>FVB/N</strain>
        <tissue>Mammary tumor</tissue>
    </source>
</reference>
<reference key="4">
    <citation type="journal article" date="2008" name="J. Cell. Physiol.">
        <title>Osteoclast stimulatory transmembrane protein (OC-STAMP), a novel protein induced by RANKL that promotes osteoclast differentiation.</title>
        <authorList>
            <person name="Yang M."/>
            <person name="Birnbaum M.J."/>
            <person name="MacKay C.A."/>
            <person name="Mason-Savas A."/>
            <person name="Thompson B."/>
            <person name="Odgren P.R."/>
        </authorList>
    </citation>
    <scope>FUNCTION</scope>
    <scope>INDUCTION</scope>
    <scope>TISSUE SPECIFICITY</scope>
</reference>
<reference key="5">
    <citation type="journal article" date="2011" name="Amino Acids">
        <title>Molecules and signaling pathways involved in the expression of OC-STAMP during osteoclastogenesis.</title>
        <authorList>
            <person name="Kim M.H."/>
            <person name="Park M."/>
            <person name="Baek S.H."/>
            <person name="Kim H.J."/>
            <person name="Kim S.H."/>
        </authorList>
    </citation>
    <scope>FUNCTION</scope>
    <scope>INDUCTION</scope>
    <scope>TISSUE SPECIFICITY</scope>
</reference>
<reference key="6">
    <citation type="journal article" date="2012" name="J. Bone Miner. Res.">
        <title>Osteoclast stimulatory transmembrane protein and dendritic cell-specific transmembrane protein cooperatively modulate cell-cell fusion to form osteoclasts and foreign body giant cells.</title>
        <authorList>
            <person name="Miyamoto H."/>
            <person name="Suzuki T."/>
            <person name="Miyauchi Y."/>
            <person name="Iwasaki R."/>
            <person name="Kobayashi T."/>
            <person name="Sato Y."/>
            <person name="Miyamoto K."/>
            <person name="Hoshi H."/>
            <person name="Hashimoto K."/>
            <person name="Yoshida S."/>
            <person name="Hao W."/>
            <person name="Mori T."/>
            <person name="Kanagawa H."/>
            <person name="Katsuyama E."/>
            <person name="Fujie A."/>
            <person name="Morioka H."/>
            <person name="Matsumoto M."/>
            <person name="Chiba K."/>
            <person name="Takeya M."/>
            <person name="Toyama Y."/>
            <person name="Miyamoto T."/>
        </authorList>
    </citation>
    <scope>FUNCTION</scope>
    <scope>DISRUPTION PHENOTYPE</scope>
    <scope>INDUCTION</scope>
    <scope>TISSUE SPECIFICITY</scope>
</reference>